<organism>
    <name type="scientific">Xanthobacter autotrophicus (strain ATCC BAA-1158 / Py2)</name>
    <dbReference type="NCBI Taxonomy" id="78245"/>
    <lineage>
        <taxon>Bacteria</taxon>
        <taxon>Pseudomonadati</taxon>
        <taxon>Pseudomonadota</taxon>
        <taxon>Alphaproteobacteria</taxon>
        <taxon>Hyphomicrobiales</taxon>
        <taxon>Xanthobacteraceae</taxon>
        <taxon>Xanthobacter</taxon>
    </lineage>
</organism>
<accession>A7IK05</accession>
<evidence type="ECO:0000255" key="1">
    <source>
        <dbReference type="HAMAP-Rule" id="MF_00360"/>
    </source>
</evidence>
<evidence type="ECO:0000256" key="2">
    <source>
        <dbReference type="SAM" id="MobiDB-lite"/>
    </source>
</evidence>
<evidence type="ECO:0000305" key="3"/>
<keyword id="KW-1185">Reference proteome</keyword>
<keyword id="KW-0687">Ribonucleoprotein</keyword>
<keyword id="KW-0689">Ribosomal protein</keyword>
<keyword id="KW-0694">RNA-binding</keyword>
<keyword id="KW-0699">rRNA-binding</keyword>
<protein>
    <recommendedName>
        <fullName evidence="1">Small ribosomal subunit protein bS6</fullName>
    </recommendedName>
    <alternativeName>
        <fullName evidence="3">30S ribosomal protein S6</fullName>
    </alternativeName>
</protein>
<gene>
    <name evidence="1" type="primary">rpsF</name>
    <name type="ordered locus">Xaut_3118</name>
</gene>
<feature type="chain" id="PRO_1000120824" description="Small ribosomal subunit protein bS6">
    <location>
        <begin position="1"/>
        <end position="152"/>
    </location>
</feature>
<feature type="region of interest" description="Disordered" evidence="2">
    <location>
        <begin position="96"/>
        <end position="152"/>
    </location>
</feature>
<dbReference type="EMBL" id="CP000781">
    <property type="protein sequence ID" value="ABS68348.1"/>
    <property type="molecule type" value="Genomic_DNA"/>
</dbReference>
<dbReference type="SMR" id="A7IK05"/>
<dbReference type="STRING" id="78245.Xaut_3118"/>
<dbReference type="KEGG" id="xau:Xaut_3118"/>
<dbReference type="eggNOG" id="COG0360">
    <property type="taxonomic scope" value="Bacteria"/>
</dbReference>
<dbReference type="HOGENOM" id="CLU_113441_2_0_5"/>
<dbReference type="OrthoDB" id="9812702at2"/>
<dbReference type="PhylomeDB" id="A7IK05"/>
<dbReference type="Proteomes" id="UP000002417">
    <property type="component" value="Chromosome"/>
</dbReference>
<dbReference type="GO" id="GO:0022627">
    <property type="term" value="C:cytosolic small ribosomal subunit"/>
    <property type="evidence" value="ECO:0007669"/>
    <property type="project" value="TreeGrafter"/>
</dbReference>
<dbReference type="GO" id="GO:0070181">
    <property type="term" value="F:small ribosomal subunit rRNA binding"/>
    <property type="evidence" value="ECO:0007669"/>
    <property type="project" value="TreeGrafter"/>
</dbReference>
<dbReference type="GO" id="GO:0003735">
    <property type="term" value="F:structural constituent of ribosome"/>
    <property type="evidence" value="ECO:0007669"/>
    <property type="project" value="InterPro"/>
</dbReference>
<dbReference type="GO" id="GO:0006412">
    <property type="term" value="P:translation"/>
    <property type="evidence" value="ECO:0007669"/>
    <property type="project" value="UniProtKB-UniRule"/>
</dbReference>
<dbReference type="CDD" id="cd00473">
    <property type="entry name" value="bS6"/>
    <property type="match status" value="1"/>
</dbReference>
<dbReference type="Gene3D" id="3.30.70.60">
    <property type="match status" value="1"/>
</dbReference>
<dbReference type="HAMAP" id="MF_00360">
    <property type="entry name" value="Ribosomal_bS6"/>
    <property type="match status" value="1"/>
</dbReference>
<dbReference type="InterPro" id="IPR000529">
    <property type="entry name" value="Ribosomal_bS6"/>
</dbReference>
<dbReference type="InterPro" id="IPR035980">
    <property type="entry name" value="Ribosomal_bS6_sf"/>
</dbReference>
<dbReference type="InterPro" id="IPR020814">
    <property type="entry name" value="Ribosomal_S6_plastid/chlpt"/>
</dbReference>
<dbReference type="InterPro" id="IPR014717">
    <property type="entry name" value="Transl_elong_EF1B/ribsomal_bS6"/>
</dbReference>
<dbReference type="NCBIfam" id="TIGR00166">
    <property type="entry name" value="S6"/>
    <property type="match status" value="1"/>
</dbReference>
<dbReference type="PANTHER" id="PTHR21011">
    <property type="entry name" value="MITOCHONDRIAL 28S RIBOSOMAL PROTEIN S6"/>
    <property type="match status" value="1"/>
</dbReference>
<dbReference type="PANTHER" id="PTHR21011:SF1">
    <property type="entry name" value="SMALL RIBOSOMAL SUBUNIT PROTEIN BS6M"/>
    <property type="match status" value="1"/>
</dbReference>
<dbReference type="Pfam" id="PF01250">
    <property type="entry name" value="Ribosomal_S6"/>
    <property type="match status" value="1"/>
</dbReference>
<dbReference type="SUPFAM" id="SSF54995">
    <property type="entry name" value="Ribosomal protein S6"/>
    <property type="match status" value="1"/>
</dbReference>
<comment type="function">
    <text evidence="1">Binds together with bS18 to 16S ribosomal RNA.</text>
</comment>
<comment type="similarity">
    <text evidence="1">Belongs to the bacterial ribosomal protein bS6 family.</text>
</comment>
<reference key="1">
    <citation type="submission" date="2007-07" db="EMBL/GenBank/DDBJ databases">
        <title>Complete sequence of chromosome of Xanthobacter autotrophicus Py2.</title>
        <authorList>
            <consortium name="US DOE Joint Genome Institute"/>
            <person name="Copeland A."/>
            <person name="Lucas S."/>
            <person name="Lapidus A."/>
            <person name="Barry K."/>
            <person name="Glavina del Rio T."/>
            <person name="Hammon N."/>
            <person name="Israni S."/>
            <person name="Dalin E."/>
            <person name="Tice H."/>
            <person name="Pitluck S."/>
            <person name="Sims D."/>
            <person name="Brettin T."/>
            <person name="Bruce D."/>
            <person name="Detter J.C."/>
            <person name="Han C."/>
            <person name="Tapia R."/>
            <person name="Brainard J."/>
            <person name="Schmutz J."/>
            <person name="Larimer F."/>
            <person name="Land M."/>
            <person name="Hauser L."/>
            <person name="Kyrpides N."/>
            <person name="Kim E."/>
            <person name="Ensigns S.A."/>
            <person name="Richardson P."/>
        </authorList>
    </citation>
    <scope>NUCLEOTIDE SEQUENCE [LARGE SCALE GENOMIC DNA]</scope>
    <source>
        <strain>ATCC BAA-1158 / Py2</strain>
    </source>
</reference>
<name>RS6_XANP2</name>
<proteinExistence type="inferred from homology"/>
<sequence length="152" mass="17437">MPLYEHVFLARQDVTAQQVEELTTRFKGVIEANGGSVGKTEYWGVKSLTYRINKNRKAHFTLLNINAPAAAIQELERQQRIDEDVLRILTLRVEEHEEGPSAMLQKRDRDDRGERGDRGDRGDRGDRGFGGREDRPRRPRPTEESHGGEEEV</sequence>